<reference key="1">
    <citation type="journal article" date="1998" name="Science">
        <title>Genome sequence of the nematode C. elegans: a platform for investigating biology.</title>
        <authorList>
            <consortium name="The C. elegans sequencing consortium"/>
        </authorList>
    </citation>
    <scope>NUCLEOTIDE SEQUENCE [LARGE SCALE GENOMIC DNA]</scope>
    <source>
        <strain>Bristol N2</strain>
    </source>
</reference>
<accession>Q18938</accession>
<organism>
    <name type="scientific">Caenorhabditis elegans</name>
    <dbReference type="NCBI Taxonomy" id="6239"/>
    <lineage>
        <taxon>Eukaryota</taxon>
        <taxon>Metazoa</taxon>
        <taxon>Ecdysozoa</taxon>
        <taxon>Nematoda</taxon>
        <taxon>Chromadorea</taxon>
        <taxon>Rhabditida</taxon>
        <taxon>Rhabditina</taxon>
        <taxon>Rhabditomorpha</taxon>
        <taxon>Rhabditoidea</taxon>
        <taxon>Rhabditidae</taxon>
        <taxon>Peloderinae</taxon>
        <taxon>Caenorhabditis</taxon>
    </lineage>
</organism>
<feature type="chain" id="PRO_0000186025" description="Probable maleylacetoacetate isomerase">
    <location>
        <begin position="1"/>
        <end position="214"/>
    </location>
</feature>
<feature type="domain" description="GST N-terminal">
    <location>
        <begin position="4"/>
        <end position="84"/>
    </location>
</feature>
<feature type="domain" description="GST C-terminal">
    <location>
        <begin position="89"/>
        <end position="212"/>
    </location>
</feature>
<feature type="binding site" evidence="1">
    <location>
        <begin position="14"/>
        <end position="19"/>
    </location>
    <ligand>
        <name>glutathione</name>
        <dbReference type="ChEBI" id="CHEBI:57925"/>
    </ligand>
</feature>
<feature type="binding site" evidence="1">
    <location>
        <position position="56"/>
    </location>
    <ligand>
        <name>glutathione</name>
        <dbReference type="ChEBI" id="CHEBI:57925"/>
    </ligand>
</feature>
<feature type="binding site" evidence="1">
    <location>
        <begin position="68"/>
        <end position="69"/>
    </location>
    <ligand>
        <name>glutathione</name>
        <dbReference type="ChEBI" id="CHEBI:57925"/>
    </ligand>
</feature>
<feature type="binding site" evidence="1">
    <location>
        <position position="108"/>
    </location>
    <ligand>
        <name>glutathione</name>
        <dbReference type="ChEBI" id="CHEBI:57925"/>
    </ligand>
</feature>
<feature type="binding site" evidence="1">
    <location>
        <begin position="112"/>
        <end position="114"/>
    </location>
    <ligand>
        <name>glutathione</name>
        <dbReference type="ChEBI" id="CHEBI:57925"/>
    </ligand>
</feature>
<sequence length="214" mass="23656">MSNQKPVLYSYWRSSCSWRVRIALALKNVDYEYKTVDLLSEEAKSKLKEINPAAKVPTFVVDGQVITESLAIIEYLEETHPDVPLLPKDPIKRAHARAISLLVASGIQPLHNLKVLQLLNKKEAGFGGQFAKQFVVEGLTALEILLKQHSGKYAVGDDVTIADLSIPPLIYSANRFNLDLSPYPTVNRINETLADIPAFIAAHPDNQPDTGLNA</sequence>
<comment type="catalytic activity">
    <reaction>
        <text>4-maleylacetoacetate = 4-fumarylacetoacetate</text>
        <dbReference type="Rhea" id="RHEA:14817"/>
        <dbReference type="ChEBI" id="CHEBI:17105"/>
        <dbReference type="ChEBI" id="CHEBI:18034"/>
        <dbReference type="EC" id="5.2.1.2"/>
    </reaction>
</comment>
<comment type="cofactor">
    <cofactor evidence="1">
        <name>glutathione</name>
        <dbReference type="ChEBI" id="CHEBI:57925"/>
    </cofactor>
</comment>
<comment type="pathway">
    <text>Amino-acid degradation; L-phenylalanine degradation; acetoacetate and fumarate from L-phenylalanine: step 5/6.</text>
</comment>
<comment type="interaction">
    <interactant intactId="EBI-318532">
        <id>Q18938</id>
    </interactant>
    <interactant intactId="EBI-318532">
        <id>Q18938</id>
        <label>gst-42</label>
    </interactant>
    <organismsDiffer>false</organismsDiffer>
    <experiments>3</experiments>
</comment>
<comment type="subcellular location">
    <subcellularLocation>
        <location evidence="1">Cytoplasm</location>
    </subcellularLocation>
</comment>
<comment type="similarity">
    <text evidence="2">Belongs to the GST superfamily. Zeta family.</text>
</comment>
<dbReference type="EC" id="5.2.1.2"/>
<dbReference type="EMBL" id="Z66560">
    <property type="protein sequence ID" value="CAA91449.1"/>
    <property type="molecule type" value="Genomic_DNA"/>
</dbReference>
<dbReference type="PIR" id="T20294">
    <property type="entry name" value="T20294"/>
</dbReference>
<dbReference type="RefSeq" id="NP_509962.1">
    <property type="nucleotide sequence ID" value="NM_077561.8"/>
</dbReference>
<dbReference type="SMR" id="Q18938"/>
<dbReference type="BioGRID" id="48718">
    <property type="interactions" value="20"/>
</dbReference>
<dbReference type="DIP" id="DIP-24905N"/>
<dbReference type="FunCoup" id="Q18938">
    <property type="interactions" value="1632"/>
</dbReference>
<dbReference type="IntAct" id="Q18938">
    <property type="interactions" value="3"/>
</dbReference>
<dbReference type="STRING" id="6239.D1053.1.1"/>
<dbReference type="PaxDb" id="6239-D1053.1"/>
<dbReference type="PeptideAtlas" id="Q18938"/>
<dbReference type="EnsemblMetazoa" id="D1053.1.1">
    <property type="protein sequence ID" value="D1053.1.1"/>
    <property type="gene ID" value="WBGene00001790"/>
</dbReference>
<dbReference type="GeneID" id="183911"/>
<dbReference type="KEGG" id="cel:CELE_D1053.1"/>
<dbReference type="UCSC" id="D1053.1">
    <property type="organism name" value="c. elegans"/>
</dbReference>
<dbReference type="AGR" id="WB:WBGene00001790"/>
<dbReference type="CTD" id="183911"/>
<dbReference type="WormBase" id="D1053.1">
    <property type="protein sequence ID" value="CE03099"/>
    <property type="gene ID" value="WBGene00001790"/>
    <property type="gene designation" value="gst-42"/>
</dbReference>
<dbReference type="eggNOG" id="KOG0868">
    <property type="taxonomic scope" value="Eukaryota"/>
</dbReference>
<dbReference type="GeneTree" id="ENSGT00390000006580"/>
<dbReference type="HOGENOM" id="CLU_011226_20_1_1"/>
<dbReference type="InParanoid" id="Q18938"/>
<dbReference type="OMA" id="HWISQGL"/>
<dbReference type="OrthoDB" id="202840at2759"/>
<dbReference type="PhylomeDB" id="Q18938"/>
<dbReference type="Reactome" id="R-CEL-156590">
    <property type="pathway name" value="Glutathione conjugation"/>
</dbReference>
<dbReference type="Reactome" id="R-CEL-204174">
    <property type="pathway name" value="Regulation of pyruvate dehydrogenase (PDH) complex"/>
</dbReference>
<dbReference type="Reactome" id="R-CEL-8963684">
    <property type="pathway name" value="Tyrosine catabolism"/>
</dbReference>
<dbReference type="UniPathway" id="UPA00139">
    <property type="reaction ID" value="UER00340"/>
</dbReference>
<dbReference type="PRO" id="PR:Q18938"/>
<dbReference type="Proteomes" id="UP000001940">
    <property type="component" value="Chromosome X"/>
</dbReference>
<dbReference type="Bgee" id="WBGene00001790">
    <property type="expression patterns" value="Expressed in larva and 4 other cell types or tissues"/>
</dbReference>
<dbReference type="GO" id="GO:0005739">
    <property type="term" value="C:mitochondrion"/>
    <property type="evidence" value="ECO:0000318"/>
    <property type="project" value="GO_Central"/>
</dbReference>
<dbReference type="GO" id="GO:0004364">
    <property type="term" value="F:glutathione transferase activity"/>
    <property type="evidence" value="ECO:0000318"/>
    <property type="project" value="GO_Central"/>
</dbReference>
<dbReference type="GO" id="GO:0042802">
    <property type="term" value="F:identical protein binding"/>
    <property type="evidence" value="ECO:0000353"/>
    <property type="project" value="IntAct"/>
</dbReference>
<dbReference type="GO" id="GO:0016034">
    <property type="term" value="F:maleylacetoacetate isomerase activity"/>
    <property type="evidence" value="ECO:0000318"/>
    <property type="project" value="GO_Central"/>
</dbReference>
<dbReference type="GO" id="GO:0006749">
    <property type="term" value="P:glutathione metabolic process"/>
    <property type="evidence" value="ECO:0000318"/>
    <property type="project" value="GO_Central"/>
</dbReference>
<dbReference type="GO" id="GO:0006559">
    <property type="term" value="P:L-phenylalanine catabolic process"/>
    <property type="evidence" value="ECO:0000318"/>
    <property type="project" value="GO_Central"/>
</dbReference>
<dbReference type="GO" id="GO:0006572">
    <property type="term" value="P:tyrosine catabolic process"/>
    <property type="evidence" value="ECO:0007669"/>
    <property type="project" value="UniProtKB-KW"/>
</dbReference>
<dbReference type="CDD" id="cd03191">
    <property type="entry name" value="GST_C_Zeta"/>
    <property type="match status" value="1"/>
</dbReference>
<dbReference type="CDD" id="cd03042">
    <property type="entry name" value="GST_N_Zeta"/>
    <property type="match status" value="1"/>
</dbReference>
<dbReference type="FunFam" id="3.40.30.10:FF:000356">
    <property type="entry name" value="Glutathione S-Transferase"/>
    <property type="match status" value="1"/>
</dbReference>
<dbReference type="FunFam" id="1.20.1050.10:FF:000017">
    <property type="entry name" value="Maleylacetoacetate isomerase"/>
    <property type="match status" value="1"/>
</dbReference>
<dbReference type="Gene3D" id="1.20.1050.10">
    <property type="match status" value="1"/>
</dbReference>
<dbReference type="Gene3D" id="3.40.30.10">
    <property type="entry name" value="Glutaredoxin"/>
    <property type="match status" value="1"/>
</dbReference>
<dbReference type="InterPro" id="IPR010987">
    <property type="entry name" value="Glutathione-S-Trfase_C-like"/>
</dbReference>
<dbReference type="InterPro" id="IPR036282">
    <property type="entry name" value="Glutathione-S-Trfase_C_sf"/>
</dbReference>
<dbReference type="InterPro" id="IPR040079">
    <property type="entry name" value="Glutathione_S-Trfase"/>
</dbReference>
<dbReference type="InterPro" id="IPR004045">
    <property type="entry name" value="Glutathione_S-Trfase_N"/>
</dbReference>
<dbReference type="InterPro" id="IPR004046">
    <property type="entry name" value="GST_C"/>
</dbReference>
<dbReference type="InterPro" id="IPR005955">
    <property type="entry name" value="GST_Zeta"/>
</dbReference>
<dbReference type="InterPro" id="IPR034330">
    <property type="entry name" value="GST_Zeta_C"/>
</dbReference>
<dbReference type="InterPro" id="IPR034333">
    <property type="entry name" value="GST_Zeta_N"/>
</dbReference>
<dbReference type="InterPro" id="IPR036249">
    <property type="entry name" value="Thioredoxin-like_sf"/>
</dbReference>
<dbReference type="NCBIfam" id="TIGR01262">
    <property type="entry name" value="maiA"/>
    <property type="match status" value="1"/>
</dbReference>
<dbReference type="PANTHER" id="PTHR42673">
    <property type="entry name" value="MALEYLACETOACETATE ISOMERASE"/>
    <property type="match status" value="1"/>
</dbReference>
<dbReference type="PANTHER" id="PTHR42673:SF4">
    <property type="entry name" value="MALEYLACETOACETATE ISOMERASE"/>
    <property type="match status" value="1"/>
</dbReference>
<dbReference type="Pfam" id="PF14497">
    <property type="entry name" value="GST_C_3"/>
    <property type="match status" value="1"/>
</dbReference>
<dbReference type="Pfam" id="PF13409">
    <property type="entry name" value="GST_N_2"/>
    <property type="match status" value="1"/>
</dbReference>
<dbReference type="SFLD" id="SFLDS00019">
    <property type="entry name" value="Glutathione_Transferase_(cytos"/>
    <property type="match status" value="1"/>
</dbReference>
<dbReference type="SFLD" id="SFLDG00358">
    <property type="entry name" value="Main_(cytGST)"/>
    <property type="match status" value="1"/>
</dbReference>
<dbReference type="SUPFAM" id="SSF47616">
    <property type="entry name" value="GST C-terminal domain-like"/>
    <property type="match status" value="1"/>
</dbReference>
<dbReference type="SUPFAM" id="SSF52833">
    <property type="entry name" value="Thioredoxin-like"/>
    <property type="match status" value="1"/>
</dbReference>
<dbReference type="PROSITE" id="PS50405">
    <property type="entry name" value="GST_CTER"/>
    <property type="match status" value="1"/>
</dbReference>
<dbReference type="PROSITE" id="PS50404">
    <property type="entry name" value="GST_NTER"/>
    <property type="match status" value="1"/>
</dbReference>
<keyword id="KW-0963">Cytoplasm</keyword>
<keyword id="KW-0413">Isomerase</keyword>
<keyword id="KW-0585">Phenylalanine catabolism</keyword>
<keyword id="KW-1185">Reference proteome</keyword>
<keyword id="KW-0828">Tyrosine catabolism</keyword>
<proteinExistence type="evidence at protein level"/>
<gene>
    <name type="primary">gst-42</name>
    <name type="ORF">D1053.1</name>
</gene>
<protein>
    <recommendedName>
        <fullName>Probable maleylacetoacetate isomerase</fullName>
        <shortName>MAAI</shortName>
        <ecNumber>5.2.1.2</ecNumber>
    </recommendedName>
    <alternativeName>
        <fullName>Glutathione S-transferase gst-42</fullName>
    </alternativeName>
</protein>
<name>MAAI_CAEEL</name>
<evidence type="ECO:0000250" key="1"/>
<evidence type="ECO:0000305" key="2"/>